<name>RUVA_HISS2</name>
<evidence type="ECO:0000255" key="1">
    <source>
        <dbReference type="HAMAP-Rule" id="MF_00031"/>
    </source>
</evidence>
<reference key="1">
    <citation type="submission" date="2008-02" db="EMBL/GenBank/DDBJ databases">
        <title>Complete sequence of Haemophilus somnus 2336.</title>
        <authorList>
            <consortium name="US DOE Joint Genome Institute"/>
            <person name="Siddaramappa S."/>
            <person name="Duncan A.J."/>
            <person name="Challacombe J.F."/>
            <person name="Rainey D."/>
            <person name="Gillaspy A.F."/>
            <person name="Carson M."/>
            <person name="Gipson J."/>
            <person name="Gipson M."/>
            <person name="Bruce D."/>
            <person name="Detter J.C."/>
            <person name="Han C.S."/>
            <person name="Land M."/>
            <person name="Tapia R."/>
            <person name="Thompson L.S."/>
            <person name="Orvis J."/>
            <person name="Zaitshik J."/>
            <person name="Barnes G."/>
            <person name="Brettin T.S."/>
            <person name="Dyer D.W."/>
            <person name="Inzana T.J."/>
        </authorList>
    </citation>
    <scope>NUCLEOTIDE SEQUENCE [LARGE SCALE GENOMIC DNA]</scope>
    <source>
        <strain>2336</strain>
    </source>
</reference>
<comment type="function">
    <text evidence="1">The RuvA-RuvB-RuvC complex processes Holliday junction (HJ) DNA during genetic recombination and DNA repair, while the RuvA-RuvB complex plays an important role in the rescue of blocked DNA replication forks via replication fork reversal (RFR). RuvA specifically binds to HJ cruciform DNA, conferring on it an open structure. The RuvB hexamer acts as an ATP-dependent pump, pulling dsDNA into and through the RuvAB complex. HJ branch migration allows RuvC to scan DNA until it finds its consensus sequence, where it cleaves and resolves the cruciform DNA.</text>
</comment>
<comment type="subunit">
    <text evidence="1">Homotetramer. Forms an RuvA(8)-RuvB(12)-Holliday junction (HJ) complex. HJ DNA is sandwiched between 2 RuvA tetramers; dsDNA enters through RuvA and exits via RuvB. An RuvB hexamer assembles on each DNA strand where it exits the tetramer. Each RuvB hexamer is contacted by two RuvA subunits (via domain III) on 2 adjacent RuvB subunits; this complex drives branch migration. In the full resolvosome a probable DNA-RuvA(4)-RuvB(12)-RuvC(2) complex forms which resolves the HJ.</text>
</comment>
<comment type="subcellular location">
    <subcellularLocation>
        <location evidence="1">Cytoplasm</location>
    </subcellularLocation>
</comment>
<comment type="domain">
    <text evidence="1">Has three domains with a flexible linker between the domains II and III and assumes an 'L' shape. Domain III is highly mobile and contacts RuvB.</text>
</comment>
<comment type="similarity">
    <text evidence="1">Belongs to the RuvA family.</text>
</comment>
<dbReference type="EMBL" id="CP000947">
    <property type="protein sequence ID" value="ACA31163.1"/>
    <property type="molecule type" value="Genomic_DNA"/>
</dbReference>
<dbReference type="RefSeq" id="WP_011608423.1">
    <property type="nucleotide sequence ID" value="NC_010519.1"/>
</dbReference>
<dbReference type="SMR" id="B0UVK3"/>
<dbReference type="STRING" id="228400.HSM_0142"/>
<dbReference type="GeneID" id="31486420"/>
<dbReference type="KEGG" id="hsm:HSM_0142"/>
<dbReference type="HOGENOM" id="CLU_087936_0_0_6"/>
<dbReference type="GO" id="GO:0005737">
    <property type="term" value="C:cytoplasm"/>
    <property type="evidence" value="ECO:0007669"/>
    <property type="project" value="UniProtKB-SubCell"/>
</dbReference>
<dbReference type="GO" id="GO:0009379">
    <property type="term" value="C:Holliday junction helicase complex"/>
    <property type="evidence" value="ECO:0007669"/>
    <property type="project" value="InterPro"/>
</dbReference>
<dbReference type="GO" id="GO:0048476">
    <property type="term" value="C:Holliday junction resolvase complex"/>
    <property type="evidence" value="ECO:0007669"/>
    <property type="project" value="UniProtKB-UniRule"/>
</dbReference>
<dbReference type="GO" id="GO:0005524">
    <property type="term" value="F:ATP binding"/>
    <property type="evidence" value="ECO:0007669"/>
    <property type="project" value="InterPro"/>
</dbReference>
<dbReference type="GO" id="GO:0000400">
    <property type="term" value="F:four-way junction DNA binding"/>
    <property type="evidence" value="ECO:0007669"/>
    <property type="project" value="UniProtKB-UniRule"/>
</dbReference>
<dbReference type="GO" id="GO:0009378">
    <property type="term" value="F:four-way junction helicase activity"/>
    <property type="evidence" value="ECO:0007669"/>
    <property type="project" value="InterPro"/>
</dbReference>
<dbReference type="GO" id="GO:0006310">
    <property type="term" value="P:DNA recombination"/>
    <property type="evidence" value="ECO:0007669"/>
    <property type="project" value="UniProtKB-UniRule"/>
</dbReference>
<dbReference type="GO" id="GO:0006281">
    <property type="term" value="P:DNA repair"/>
    <property type="evidence" value="ECO:0007669"/>
    <property type="project" value="UniProtKB-UniRule"/>
</dbReference>
<dbReference type="CDD" id="cd14332">
    <property type="entry name" value="UBA_RuvA_C"/>
    <property type="match status" value="1"/>
</dbReference>
<dbReference type="FunFam" id="2.40.50.140:FF:000083">
    <property type="entry name" value="Holliday junction ATP-dependent DNA helicase RuvA"/>
    <property type="match status" value="1"/>
</dbReference>
<dbReference type="Gene3D" id="1.10.150.20">
    <property type="entry name" value="5' to 3' exonuclease, C-terminal subdomain"/>
    <property type="match status" value="1"/>
</dbReference>
<dbReference type="Gene3D" id="1.10.8.10">
    <property type="entry name" value="DNA helicase RuvA subunit, C-terminal domain"/>
    <property type="match status" value="1"/>
</dbReference>
<dbReference type="Gene3D" id="2.40.50.140">
    <property type="entry name" value="Nucleic acid-binding proteins"/>
    <property type="match status" value="1"/>
</dbReference>
<dbReference type="HAMAP" id="MF_00031">
    <property type="entry name" value="DNA_HJ_migration_RuvA"/>
    <property type="match status" value="1"/>
</dbReference>
<dbReference type="InterPro" id="IPR013849">
    <property type="entry name" value="DNA_helicase_Holl-junc_RuvA_I"/>
</dbReference>
<dbReference type="InterPro" id="IPR003583">
    <property type="entry name" value="Hlx-hairpin-Hlx_DNA-bd_motif"/>
</dbReference>
<dbReference type="InterPro" id="IPR012340">
    <property type="entry name" value="NA-bd_OB-fold"/>
</dbReference>
<dbReference type="InterPro" id="IPR000085">
    <property type="entry name" value="RuvA"/>
</dbReference>
<dbReference type="InterPro" id="IPR010994">
    <property type="entry name" value="RuvA_2-like"/>
</dbReference>
<dbReference type="InterPro" id="IPR011114">
    <property type="entry name" value="RuvA_C"/>
</dbReference>
<dbReference type="InterPro" id="IPR036267">
    <property type="entry name" value="RuvA_C_sf"/>
</dbReference>
<dbReference type="NCBIfam" id="TIGR00084">
    <property type="entry name" value="ruvA"/>
    <property type="match status" value="1"/>
</dbReference>
<dbReference type="Pfam" id="PF14520">
    <property type="entry name" value="HHH_5"/>
    <property type="match status" value="1"/>
</dbReference>
<dbReference type="Pfam" id="PF07499">
    <property type="entry name" value="RuvA_C"/>
    <property type="match status" value="1"/>
</dbReference>
<dbReference type="Pfam" id="PF01330">
    <property type="entry name" value="RuvA_N"/>
    <property type="match status" value="1"/>
</dbReference>
<dbReference type="SMART" id="SM00278">
    <property type="entry name" value="HhH1"/>
    <property type="match status" value="2"/>
</dbReference>
<dbReference type="SUPFAM" id="SSF46929">
    <property type="entry name" value="DNA helicase RuvA subunit, C-terminal domain"/>
    <property type="match status" value="1"/>
</dbReference>
<dbReference type="SUPFAM" id="SSF50249">
    <property type="entry name" value="Nucleic acid-binding proteins"/>
    <property type="match status" value="1"/>
</dbReference>
<dbReference type="SUPFAM" id="SSF47781">
    <property type="entry name" value="RuvA domain 2-like"/>
    <property type="match status" value="1"/>
</dbReference>
<protein>
    <recommendedName>
        <fullName evidence="1">Holliday junction branch migration complex subunit RuvA</fullName>
    </recommendedName>
</protein>
<feature type="chain" id="PRO_1000074423" description="Holliday junction branch migration complex subunit RuvA">
    <location>
        <begin position="1"/>
        <end position="204"/>
    </location>
</feature>
<feature type="region of interest" description="Domain I" evidence="1">
    <location>
        <begin position="1"/>
        <end position="64"/>
    </location>
</feature>
<feature type="region of interest" description="Domain II" evidence="1">
    <location>
        <begin position="65"/>
        <end position="143"/>
    </location>
</feature>
<feature type="region of interest" description="Flexible linker" evidence="1">
    <location>
        <begin position="144"/>
        <end position="155"/>
    </location>
</feature>
<feature type="region of interest" description="Domain III" evidence="1">
    <location>
        <begin position="156"/>
        <end position="204"/>
    </location>
</feature>
<organism>
    <name type="scientific">Histophilus somni (strain 2336)</name>
    <name type="common">Haemophilus somnus</name>
    <dbReference type="NCBI Taxonomy" id="228400"/>
    <lineage>
        <taxon>Bacteria</taxon>
        <taxon>Pseudomonadati</taxon>
        <taxon>Pseudomonadota</taxon>
        <taxon>Gammaproteobacteria</taxon>
        <taxon>Pasteurellales</taxon>
        <taxon>Pasteurellaceae</taxon>
        <taxon>Histophilus</taxon>
    </lineage>
</organism>
<proteinExistence type="inferred from homology"/>
<keyword id="KW-0963">Cytoplasm</keyword>
<keyword id="KW-0227">DNA damage</keyword>
<keyword id="KW-0233">DNA recombination</keyword>
<keyword id="KW-0234">DNA repair</keyword>
<keyword id="KW-0238">DNA-binding</keyword>
<sequence length="204" mass="22638">MIGRVTGILVEKQAPEILLDVQGVGYELLLPMTSFYNLPEVGQETTLFTHFVVREDAHLLFGFSHKQDRSLFRELIKTNGVGPKLALAILSAMSVNEFVYAIEQEELSKLVKIPGVGKKTAERLLVELKGKFKGLQQTDFFIKSSHLPGIKCSKLDQSLQLDEAVSALIALGYKPIEAEKMVKKVLKADLTSEQLIREALKAAL</sequence>
<accession>B0UVK3</accession>
<gene>
    <name evidence="1" type="primary">ruvA</name>
    <name type="ordered locus">HSM_0142</name>
</gene>